<sequence length="588" mass="65640">MSAGEVERLVSELSGGTGGDEEEEWLYGDENEVERPEEENASANPPSGIEDETAENGVPKPKVTETEDDSDSDSDDDEDDVHVTIGDIKTGAPQYGSYGTAPVNLNIKTGGRVYGTTGTKVKGVDLDAPGSINGVPLLEVDLDSFEDKPWRKPGADLSDYFNYGFNEDTWKAYCEKQKRIRMGLEVIPVTSTTNKITAEDCTMEVTPGAEIQDGRFNLFKVQQGRTGNSEKETALPSAKAEFTSPPSLFKTGLPPSRNSTSSQSQTSTASRKANSSVGKWQDRYGRAESPDLRRLPGAIDVIGQTITISRVEGRRRANENSNIQVLSERSATAVDNNFSKPPPFFPPGAPPTHLPPPPFLPPPPTVSTAPPLIPPPGIPITVPPPGFPPPPGAPPPSLIPTIESGHSSGYDSRSARAFPYGNVAFPHLPGSAPSWPSLVDTSKQWDYYARREKDRDRERDRDRERDRDRDRERERTRERERERDHSPTPSVFNSDEERYRYREYAERGYERHRASREKEERHRERRHREKEETRHKSSRSNSRRRHESEEGDSHRRHKHKKSKRSKEGKEAGSEPAPEQESTEATPAE</sequence>
<gene>
    <name type="primary">FIP1L1</name>
</gene>
<organism>
    <name type="scientific">Pongo abelii</name>
    <name type="common">Sumatran orangutan</name>
    <name type="synonym">Pongo pygmaeus abelii</name>
    <dbReference type="NCBI Taxonomy" id="9601"/>
    <lineage>
        <taxon>Eukaryota</taxon>
        <taxon>Metazoa</taxon>
        <taxon>Chordata</taxon>
        <taxon>Craniata</taxon>
        <taxon>Vertebrata</taxon>
        <taxon>Euteleostomi</taxon>
        <taxon>Mammalia</taxon>
        <taxon>Eutheria</taxon>
        <taxon>Euarchontoglires</taxon>
        <taxon>Primates</taxon>
        <taxon>Haplorrhini</taxon>
        <taxon>Catarrhini</taxon>
        <taxon>Hominidae</taxon>
        <taxon>Pongo</taxon>
    </lineage>
</organism>
<accession>Q5RAA7</accession>
<comment type="function">
    <text evidence="1">Component of the cleavage and polyadenylation specificity factor (CPSF) complex that plays a key role in pre-mRNA 3'-end formation, recognizing the AAUAAA signal sequence and interacting with poly(A) polymerase and other factors to bring about cleavage and poly(A) addition. FIP1L1 contributes to poly(A) site recognition and stimulates poly(A) addition. Binds to U-rich RNA sequence elements surrounding the poly(A) site. May act to tether poly(A) polymerase to the CPSF complex (By similarity).</text>
</comment>
<comment type="subunit">
    <text evidence="2 3">Component of the cleavage and polyadenylation specificity factor (CPSF) complex, composed of CPSF1, CPSF2, CPSF3, CPSF4 and FIP1L1. Found in a complex with CPSF1, FIP1L1 and PAPOLA. Interacts with CPSF1, CPSF4, CSTF2 and CSTF3. Interacts with AHCYL1 (when phosphorylated); the interaction is direct and associates AHCYL1 with the CPSF complex and RNA. Interacts with PAPOLA; the interaction seems to be increased by the interaction with AHCYL1. Interacts with NUDT21/CPSF5; this interaction occurs in a RNA sequence-specific manner. Interacts (preferentially via unphosphorylated form and Arg/Glu/Asp-rich domain) with CPSF6 (via Arg/Ser-rich domain); this interaction mediates, at least in part, the interaction between the CFIm and CPSF complexes and may be inhibited by CPSF6 hyper-phosphorylation. Interacts (preferentially via unphosphorylated form and Arg/Asp/Glu-rich domain) with CPSF7 (via Arg/Ser-rich domain); this interaction mediates, at least in part, the interaction between the CFIm and CPSF complexes and may be inhibited by CPSF7 hyper-phosphorylation.</text>
</comment>
<comment type="subcellular location">
    <subcellularLocation>
        <location evidence="1">Nucleus</location>
    </subcellularLocation>
</comment>
<comment type="similarity">
    <text evidence="5">Belongs to the FIP1 family.</text>
</comment>
<name>FIP1_PONAB</name>
<feature type="chain" id="PRO_0000215039" description="Pre-mRNA 3'-end-processing factor FIP1">
    <location>
        <begin position="1"/>
        <end position="588"/>
    </location>
</feature>
<feature type="region of interest" description="Necessary for stimulating PAPOLA activity" evidence="1">
    <location>
        <begin position="1"/>
        <end position="341"/>
    </location>
</feature>
<feature type="region of interest" description="Sufficient for interaction with PAPOLA" evidence="1">
    <location>
        <begin position="1"/>
        <end position="96"/>
    </location>
</feature>
<feature type="region of interest" description="Disordered" evidence="4">
    <location>
        <begin position="1"/>
        <end position="81"/>
    </location>
</feature>
<feature type="region of interest" description="Sufficient for interaction with CPSF4" evidence="1">
    <location>
        <begin position="122"/>
        <end position="228"/>
    </location>
</feature>
<feature type="region of interest" description="Disordered" evidence="4">
    <location>
        <begin position="223"/>
        <end position="291"/>
    </location>
</feature>
<feature type="region of interest" description="Disordered" evidence="4">
    <location>
        <begin position="334"/>
        <end position="588"/>
    </location>
</feature>
<feature type="region of interest" description="Sufficient for interaction with CPSF1 and CSTF3" evidence="1">
    <location>
        <begin position="437"/>
        <end position="588"/>
    </location>
</feature>
<feature type="region of interest" description="Arg/Asp/Glu-rich domain" evidence="2">
    <location>
        <begin position="451"/>
        <end position="484"/>
    </location>
</feature>
<feature type="compositionally biased region" description="Basic and acidic residues" evidence="4">
    <location>
        <begin position="1"/>
        <end position="10"/>
    </location>
</feature>
<feature type="compositionally biased region" description="Acidic residues" evidence="4">
    <location>
        <begin position="19"/>
        <end position="40"/>
    </location>
</feature>
<feature type="compositionally biased region" description="Acidic residues" evidence="4">
    <location>
        <begin position="66"/>
        <end position="80"/>
    </location>
</feature>
<feature type="compositionally biased region" description="Low complexity" evidence="4">
    <location>
        <begin position="259"/>
        <end position="270"/>
    </location>
</feature>
<feature type="compositionally biased region" description="Basic and acidic residues" evidence="4">
    <location>
        <begin position="280"/>
        <end position="291"/>
    </location>
</feature>
<feature type="compositionally biased region" description="Pro residues" evidence="4">
    <location>
        <begin position="340"/>
        <end position="398"/>
    </location>
</feature>
<feature type="compositionally biased region" description="Basic and acidic residues" evidence="4">
    <location>
        <begin position="448"/>
        <end position="486"/>
    </location>
</feature>
<feature type="compositionally biased region" description="Basic and acidic residues" evidence="4">
    <location>
        <begin position="495"/>
        <end position="522"/>
    </location>
</feature>
<feature type="compositionally biased region" description="Basic residues" evidence="4">
    <location>
        <begin position="536"/>
        <end position="545"/>
    </location>
</feature>
<feature type="compositionally biased region" description="Basic residues" evidence="4">
    <location>
        <begin position="554"/>
        <end position="564"/>
    </location>
</feature>
<feature type="modified residue" description="Phosphoserine" evidence="3">
    <location>
        <position position="70"/>
    </location>
</feature>
<feature type="modified residue" description="Phosphoserine" evidence="3">
    <location>
        <position position="72"/>
    </location>
</feature>
<feature type="modified residue" description="Phosphoserine" evidence="3">
    <location>
        <position position="74"/>
    </location>
</feature>
<feature type="modified residue" description="Phosphoserine" evidence="3">
    <location>
        <position position="289"/>
    </location>
</feature>
<feature type="modified residue" description="Phosphotyrosine" evidence="2">
    <location>
        <position position="420"/>
    </location>
</feature>
<feature type="modified residue" description="Phosphoserine" evidence="2">
    <location>
        <position position="486"/>
    </location>
</feature>
<feature type="modified residue" description="Phosphothreonine" evidence="2">
    <location>
        <position position="488"/>
    </location>
</feature>
<feature type="modified residue" description="Phosphoserine" evidence="2">
    <location>
        <position position="490"/>
    </location>
</feature>
<feature type="modified residue" description="Phosphoserine" evidence="2">
    <location>
        <position position="494"/>
    </location>
</feature>
<feature type="modified residue" description="Phosphoserine" evidence="2">
    <location>
        <position position="548"/>
    </location>
</feature>
<reference key="1">
    <citation type="submission" date="2004-11" db="EMBL/GenBank/DDBJ databases">
        <authorList>
            <consortium name="The German cDNA consortium"/>
        </authorList>
    </citation>
    <scope>NUCLEOTIDE SEQUENCE [LARGE SCALE MRNA]</scope>
    <source>
        <tissue>Brain cortex</tissue>
    </source>
</reference>
<dbReference type="EMBL" id="CR859111">
    <property type="protein sequence ID" value="CAH91303.1"/>
    <property type="molecule type" value="mRNA"/>
</dbReference>
<dbReference type="RefSeq" id="NP_001125772.1">
    <property type="nucleotide sequence ID" value="NM_001132300.2"/>
</dbReference>
<dbReference type="SMR" id="Q5RAA7"/>
<dbReference type="STRING" id="9601.ENSPPYP00000016499"/>
<dbReference type="GeneID" id="100172699"/>
<dbReference type="KEGG" id="pon:100172699"/>
<dbReference type="CTD" id="81608"/>
<dbReference type="eggNOG" id="KOG1049">
    <property type="taxonomic scope" value="Eukaryota"/>
</dbReference>
<dbReference type="InParanoid" id="Q5RAA7"/>
<dbReference type="OrthoDB" id="1917198at2759"/>
<dbReference type="Proteomes" id="UP000001595">
    <property type="component" value="Unplaced"/>
</dbReference>
<dbReference type="GO" id="GO:0005847">
    <property type="term" value="C:mRNA cleavage and polyadenylation specificity factor complex"/>
    <property type="evidence" value="ECO:0007669"/>
    <property type="project" value="TreeGrafter"/>
</dbReference>
<dbReference type="GO" id="GO:0003723">
    <property type="term" value="F:RNA binding"/>
    <property type="evidence" value="ECO:0007669"/>
    <property type="project" value="UniProtKB-KW"/>
</dbReference>
<dbReference type="GO" id="GO:0006397">
    <property type="term" value="P:mRNA processing"/>
    <property type="evidence" value="ECO:0007669"/>
    <property type="project" value="UniProtKB-KW"/>
</dbReference>
<dbReference type="InterPro" id="IPR007854">
    <property type="entry name" value="Fip1_dom"/>
</dbReference>
<dbReference type="InterPro" id="IPR051187">
    <property type="entry name" value="Pre-mRNA_3'-end_processing_reg"/>
</dbReference>
<dbReference type="PANTHER" id="PTHR13484">
    <property type="entry name" value="FIP1-LIKE 1 PROTEIN"/>
    <property type="match status" value="1"/>
</dbReference>
<dbReference type="PANTHER" id="PTHR13484:SF9">
    <property type="entry name" value="PRE-MRNA 3'-END-PROCESSING FACTOR FIP1"/>
    <property type="match status" value="1"/>
</dbReference>
<dbReference type="Pfam" id="PF05182">
    <property type="entry name" value="Fip1"/>
    <property type="match status" value="1"/>
</dbReference>
<proteinExistence type="evidence at transcript level"/>
<protein>
    <recommendedName>
        <fullName>Pre-mRNA 3'-end-processing factor FIP1</fullName>
    </recommendedName>
    <alternativeName>
        <fullName>FIP1-like 1 protein</fullName>
    </alternativeName>
</protein>
<keyword id="KW-0507">mRNA processing</keyword>
<keyword id="KW-0539">Nucleus</keyword>
<keyword id="KW-0597">Phosphoprotein</keyword>
<keyword id="KW-1185">Reference proteome</keyword>
<keyword id="KW-0694">RNA-binding</keyword>
<evidence type="ECO:0000250" key="1"/>
<evidence type="ECO:0000250" key="2">
    <source>
        <dbReference type="UniProtKB" id="Q6UN15"/>
    </source>
</evidence>
<evidence type="ECO:0000250" key="3">
    <source>
        <dbReference type="UniProtKB" id="Q9D824"/>
    </source>
</evidence>
<evidence type="ECO:0000256" key="4">
    <source>
        <dbReference type="SAM" id="MobiDB-lite"/>
    </source>
</evidence>
<evidence type="ECO:0000305" key="5"/>